<evidence type="ECO:0000255" key="1">
    <source>
        <dbReference type="HAMAP-Rule" id="MF_01972"/>
    </source>
</evidence>
<protein>
    <recommendedName>
        <fullName evidence="1">Tryptophan 2,3-dioxygenase</fullName>
        <shortName evidence="1">TDO</shortName>
        <ecNumber evidence="1">1.13.11.11</ecNumber>
    </recommendedName>
    <alternativeName>
        <fullName evidence="1">Tryptamin 2,3-dioxygenase</fullName>
    </alternativeName>
    <alternativeName>
        <fullName evidence="1">Tryptophan oxygenase</fullName>
        <shortName evidence="1">TO</shortName>
        <shortName evidence="1">TRPO</shortName>
    </alternativeName>
    <alternativeName>
        <fullName evidence="1">Tryptophan pyrrolase</fullName>
    </alternativeName>
    <alternativeName>
        <fullName evidence="1">Tryptophanase</fullName>
    </alternativeName>
</protein>
<organism>
    <name type="scientific">Anaeromyxobacter dehalogenans (strain 2CP-C)</name>
    <dbReference type="NCBI Taxonomy" id="290397"/>
    <lineage>
        <taxon>Bacteria</taxon>
        <taxon>Pseudomonadati</taxon>
        <taxon>Myxococcota</taxon>
        <taxon>Myxococcia</taxon>
        <taxon>Myxococcales</taxon>
        <taxon>Cystobacterineae</taxon>
        <taxon>Anaeromyxobacteraceae</taxon>
        <taxon>Anaeromyxobacter</taxon>
    </lineage>
</organism>
<sequence length="265" mass="29720">MTDPSAHSAALTYGSYLALDELLAAQRPRSEEHDELLFIVVHQVYELWFKQVVHELTWLQERLHRGEGGHALATLKRVLTILKTVVAQVDVIETMTPRQFTAFRSRLEAASGFQSAQFRVLEAMLGRRDDRMLAPYPPDGPGYARIAAAMAAPSLFDSLLRYLATQGFETPVVPEPRPAGWRQPSEAVQRVLLEVYRADGEAALVCERFVDLDEGVQEWRYRHVKMVERTIGDKPGTGGSAGARYLRSTLFTPAFPDLWAVRGAL</sequence>
<dbReference type="EC" id="1.13.11.11" evidence="1"/>
<dbReference type="EMBL" id="CP000251">
    <property type="protein sequence ID" value="ABC82934.1"/>
    <property type="molecule type" value="Genomic_DNA"/>
</dbReference>
<dbReference type="RefSeq" id="WP_011422216.1">
    <property type="nucleotide sequence ID" value="NC_007760.1"/>
</dbReference>
<dbReference type="SMR" id="Q2IEC3"/>
<dbReference type="STRING" id="290397.Adeh_3165"/>
<dbReference type="KEGG" id="ade:Adeh_3165"/>
<dbReference type="eggNOG" id="COG3483">
    <property type="taxonomic scope" value="Bacteria"/>
</dbReference>
<dbReference type="HOGENOM" id="CLU_063240_0_0_7"/>
<dbReference type="OrthoDB" id="9776847at2"/>
<dbReference type="UniPathway" id="UPA00333">
    <property type="reaction ID" value="UER00453"/>
</dbReference>
<dbReference type="Proteomes" id="UP000001935">
    <property type="component" value="Chromosome"/>
</dbReference>
<dbReference type="GO" id="GO:0020037">
    <property type="term" value="F:heme binding"/>
    <property type="evidence" value="ECO:0000250"/>
    <property type="project" value="UniProtKB"/>
</dbReference>
<dbReference type="GO" id="GO:0046872">
    <property type="term" value="F:metal ion binding"/>
    <property type="evidence" value="ECO:0007669"/>
    <property type="project" value="UniProtKB-KW"/>
</dbReference>
<dbReference type="GO" id="GO:0004833">
    <property type="term" value="F:tryptophan 2,3-dioxygenase activity"/>
    <property type="evidence" value="ECO:0000250"/>
    <property type="project" value="UniProtKB"/>
</dbReference>
<dbReference type="GO" id="GO:0019442">
    <property type="term" value="P:L-tryptophan catabolic process to acetyl-CoA"/>
    <property type="evidence" value="ECO:0007669"/>
    <property type="project" value="TreeGrafter"/>
</dbReference>
<dbReference type="GO" id="GO:0019441">
    <property type="term" value="P:L-tryptophan catabolic process to kynurenine"/>
    <property type="evidence" value="ECO:0000250"/>
    <property type="project" value="UniProtKB"/>
</dbReference>
<dbReference type="FunFam" id="1.20.58.480:FF:000001">
    <property type="entry name" value="Tryptophan 2,3-dioxygenase"/>
    <property type="match status" value="1"/>
</dbReference>
<dbReference type="Gene3D" id="1.20.58.480">
    <property type="match status" value="1"/>
</dbReference>
<dbReference type="HAMAP" id="MF_01972">
    <property type="entry name" value="T23O"/>
    <property type="match status" value="1"/>
</dbReference>
<dbReference type="InterPro" id="IPR037217">
    <property type="entry name" value="Trp/Indoleamine_2_3_dOase-like"/>
</dbReference>
<dbReference type="InterPro" id="IPR004981">
    <property type="entry name" value="Trp_2_3_dOase"/>
</dbReference>
<dbReference type="PANTHER" id="PTHR10138">
    <property type="entry name" value="TRYPTOPHAN 2,3-DIOXYGENASE"/>
    <property type="match status" value="1"/>
</dbReference>
<dbReference type="PANTHER" id="PTHR10138:SF0">
    <property type="entry name" value="TRYPTOPHAN 2,3-DIOXYGENASE"/>
    <property type="match status" value="1"/>
</dbReference>
<dbReference type="Pfam" id="PF03301">
    <property type="entry name" value="Trp_dioxygenase"/>
    <property type="match status" value="2"/>
</dbReference>
<dbReference type="SUPFAM" id="SSF140959">
    <property type="entry name" value="Indolic compounds 2,3-dioxygenase-like"/>
    <property type="match status" value="1"/>
</dbReference>
<name>T23O_ANADE</name>
<gene>
    <name evidence="1" type="primary">kynA</name>
    <name type="ordered locus">Adeh_3165</name>
</gene>
<proteinExistence type="inferred from homology"/>
<accession>Q2IEC3</accession>
<reference key="1">
    <citation type="submission" date="2006-01" db="EMBL/GenBank/DDBJ databases">
        <title>Complete sequence of Anaeromyxobacter dehalogenans 2CP-C.</title>
        <authorList>
            <person name="Copeland A."/>
            <person name="Lucas S."/>
            <person name="Lapidus A."/>
            <person name="Barry K."/>
            <person name="Detter J.C."/>
            <person name="Glavina T."/>
            <person name="Hammon N."/>
            <person name="Israni S."/>
            <person name="Pitluck S."/>
            <person name="Brettin T."/>
            <person name="Bruce D."/>
            <person name="Han C."/>
            <person name="Tapia R."/>
            <person name="Gilna P."/>
            <person name="Kiss H."/>
            <person name="Schmutz J."/>
            <person name="Larimer F."/>
            <person name="Land M."/>
            <person name="Kyrpides N."/>
            <person name="Anderson I."/>
            <person name="Sanford R.A."/>
            <person name="Ritalahti K.M."/>
            <person name="Thomas H.S."/>
            <person name="Kirby J.R."/>
            <person name="Zhulin I.B."/>
            <person name="Loeffler F.E."/>
            <person name="Richardson P."/>
        </authorList>
    </citation>
    <scope>NUCLEOTIDE SEQUENCE [LARGE SCALE GENOMIC DNA]</scope>
    <source>
        <strain>2CP-C</strain>
    </source>
</reference>
<keyword id="KW-0223">Dioxygenase</keyword>
<keyword id="KW-0349">Heme</keyword>
<keyword id="KW-0408">Iron</keyword>
<keyword id="KW-0479">Metal-binding</keyword>
<keyword id="KW-0560">Oxidoreductase</keyword>
<keyword id="KW-1185">Reference proteome</keyword>
<keyword id="KW-0823">Tryptophan catabolism</keyword>
<comment type="function">
    <text evidence="1">Heme-dependent dioxygenase that catalyzes the oxidative cleavage of the L-tryptophan (L-Trp) pyrrole ring and converts L-tryptophan to N-formyl-L-kynurenine. Catalyzes the oxidative cleavage of the indole moiety.</text>
</comment>
<comment type="catalytic activity">
    <reaction evidence="1">
        <text>L-tryptophan + O2 = N-formyl-L-kynurenine</text>
        <dbReference type="Rhea" id="RHEA:24536"/>
        <dbReference type="ChEBI" id="CHEBI:15379"/>
        <dbReference type="ChEBI" id="CHEBI:57912"/>
        <dbReference type="ChEBI" id="CHEBI:58629"/>
        <dbReference type="EC" id="1.13.11.11"/>
    </reaction>
</comment>
<comment type="cofactor">
    <cofactor evidence="1">
        <name>heme</name>
        <dbReference type="ChEBI" id="CHEBI:30413"/>
    </cofactor>
    <text evidence="1">Binds 1 heme group per subunit.</text>
</comment>
<comment type="pathway">
    <text evidence="1">Amino-acid degradation; L-tryptophan degradation via kynurenine pathway; L-kynurenine from L-tryptophan: step 1/2.</text>
</comment>
<comment type="subunit">
    <text evidence="1">Homotetramer.</text>
</comment>
<comment type="similarity">
    <text evidence="1">Belongs to the tryptophan 2,3-dioxygenase family.</text>
</comment>
<feature type="chain" id="PRO_0000360080" description="Tryptophan 2,3-dioxygenase">
    <location>
        <begin position="1"/>
        <end position="265"/>
    </location>
</feature>
<feature type="binding site" evidence="1">
    <location>
        <begin position="38"/>
        <end position="42"/>
    </location>
    <ligand>
        <name>substrate</name>
    </ligand>
</feature>
<feature type="binding site" evidence="1">
    <location>
        <position position="104"/>
    </location>
    <ligand>
        <name>substrate</name>
    </ligand>
</feature>
<feature type="binding site" description="axial binding residue" evidence="1">
    <location>
        <position position="223"/>
    </location>
    <ligand>
        <name>heme</name>
        <dbReference type="ChEBI" id="CHEBI:30413"/>
    </ligand>
    <ligandPart>
        <name>Fe</name>
        <dbReference type="ChEBI" id="CHEBI:18248"/>
    </ligandPart>
</feature>
<feature type="binding site" evidence="1">
    <location>
        <position position="237"/>
    </location>
    <ligand>
        <name>substrate</name>
    </ligand>
</feature>